<comment type="function">
    <text evidence="1">Arginine methyltransferase involved in the assembly or stability of mitochondrial NADH:ubiquinone oxidoreductase complex (complex I). Acts by mediating symmetric dimethylation of 'Arg-118' of NDUFS2 after it assembles into the complex I, stabilizing the early intermediate complex.</text>
</comment>
<comment type="catalytic activity">
    <reaction evidence="1">
        <text>L-arginyl-[protein] + 2 S-adenosyl-L-methionine = N(omega),N(omega)'-dimethyl-L-arginyl-[protein] + 2 S-adenosyl-L-homocysteine + 2 H(+)</text>
        <dbReference type="Rhea" id="RHEA:48108"/>
        <dbReference type="Rhea" id="RHEA-COMP:10532"/>
        <dbReference type="Rhea" id="RHEA-COMP:11992"/>
        <dbReference type="ChEBI" id="CHEBI:15378"/>
        <dbReference type="ChEBI" id="CHEBI:29965"/>
        <dbReference type="ChEBI" id="CHEBI:57856"/>
        <dbReference type="ChEBI" id="CHEBI:59789"/>
        <dbReference type="ChEBI" id="CHEBI:88221"/>
        <dbReference type="EC" id="2.1.1.320"/>
    </reaction>
</comment>
<comment type="subunit">
    <text evidence="1">Interacts with NDUFS2.</text>
</comment>
<comment type="subcellular location">
    <subcellularLocation>
        <location evidence="1">Mitochondrion</location>
    </subcellularLocation>
</comment>
<comment type="similarity">
    <text evidence="4">Belongs to the NDUFAF7 family.</text>
</comment>
<proteinExistence type="evidence at transcript level"/>
<sequence length="436" mass="48716">MNALVRRCVARTGIPSIWRRKCFSSGNEPAESNHVTPMLRHLMYKIKSTGPITVAEYMKEVLTNPAKGYYVHHDMLGEKGDFITSPEISQIFGELLGVWFVSEWMASGKSTAFQLVELGPGRGTLTADILRVFSQLGSVLKTCDISIHLVEVSQKLSEIQALTLTEETVPLERDAESLVYMKGVTKSGIPISWYRDLKDVPTGYSFYLAHEFFDVLPVHKFQKTPHGWREVFVDIDPQSPDKLRFVLAPCATPAEAFIQRDERREHVEVCPDAGVVIQELSQRIASTGGAALIADYGHDGTKTDTLRGFYEHQLHDVLTAPGTADLTADVDFSYLRRMAQGRVASLGPVEQRTFLKNMGIDVRLKVLLDKAGDPSLQQQLLRGYDMLMNPQKMGERFHFFALLPHQRLHVGSQGGKACQSEAPSTSVPGFDELVWH</sequence>
<feature type="transit peptide" description="Mitochondrion" evidence="2">
    <location>
        <begin position="1"/>
        <end position="41"/>
    </location>
</feature>
<feature type="chain" id="PRO_0000315674" description="Protein arginine methyltransferase NDUFAF7, mitochondrial">
    <location>
        <begin position="42"/>
        <end position="436"/>
    </location>
</feature>
<feature type="region of interest" description="Disordered" evidence="3">
    <location>
        <begin position="413"/>
        <end position="436"/>
    </location>
</feature>
<reference key="1">
    <citation type="journal article" date="2004" name="Genome Res.">
        <title>The status, quality, and expansion of the NIH full-length cDNA project: the Mammalian Gene Collection (MGC).</title>
        <authorList>
            <consortium name="The MGC Project Team"/>
        </authorList>
    </citation>
    <scope>NUCLEOTIDE SEQUENCE [LARGE SCALE MRNA]</scope>
    <source>
        <tissue>Kidney</tissue>
    </source>
</reference>
<keyword id="KW-0489">Methyltransferase</keyword>
<keyword id="KW-0496">Mitochondrion</keyword>
<keyword id="KW-1185">Reference proteome</keyword>
<keyword id="KW-0808">Transferase</keyword>
<keyword id="KW-0809">Transit peptide</keyword>
<evidence type="ECO:0000250" key="1">
    <source>
        <dbReference type="UniProtKB" id="Q7L592"/>
    </source>
</evidence>
<evidence type="ECO:0000255" key="2"/>
<evidence type="ECO:0000256" key="3">
    <source>
        <dbReference type="SAM" id="MobiDB-lite"/>
    </source>
</evidence>
<evidence type="ECO:0000305" key="4"/>
<evidence type="ECO:0000312" key="5">
    <source>
        <dbReference type="RGD" id="1311578"/>
    </source>
</evidence>
<organism>
    <name type="scientific">Rattus norvegicus</name>
    <name type="common">Rat</name>
    <dbReference type="NCBI Taxonomy" id="10116"/>
    <lineage>
        <taxon>Eukaryota</taxon>
        <taxon>Metazoa</taxon>
        <taxon>Chordata</taxon>
        <taxon>Craniata</taxon>
        <taxon>Vertebrata</taxon>
        <taxon>Euteleostomi</taxon>
        <taxon>Mammalia</taxon>
        <taxon>Eutheria</taxon>
        <taxon>Euarchontoglires</taxon>
        <taxon>Glires</taxon>
        <taxon>Rodentia</taxon>
        <taxon>Myomorpha</taxon>
        <taxon>Muroidea</taxon>
        <taxon>Muridae</taxon>
        <taxon>Murinae</taxon>
        <taxon>Rattus</taxon>
    </lineage>
</organism>
<name>NDUF7_RAT</name>
<gene>
    <name evidence="5" type="primary">Ndufaf7</name>
</gene>
<protein>
    <recommendedName>
        <fullName evidence="1">Protein arginine methyltransferase NDUFAF7, mitochondrial</fullName>
        <ecNumber evidence="1">2.1.1.320</ecNumber>
    </recommendedName>
    <alternativeName>
        <fullName evidence="5">NADH dehydrogenase [ubiquinone] complex I, assembly factor 7</fullName>
    </alternativeName>
    <alternativeName>
        <fullName evidence="1">Protein midA homolog</fullName>
    </alternativeName>
</protein>
<accession>Q5XI79</accession>
<dbReference type="EC" id="2.1.1.320" evidence="1"/>
<dbReference type="EMBL" id="BC083810">
    <property type="protein sequence ID" value="AAH83810.1"/>
    <property type="molecule type" value="mRNA"/>
</dbReference>
<dbReference type="RefSeq" id="NP_001008319.1">
    <property type="nucleotide sequence ID" value="NM_001008318.1"/>
</dbReference>
<dbReference type="SMR" id="Q5XI79"/>
<dbReference type="FunCoup" id="Q5XI79">
    <property type="interactions" value="2425"/>
</dbReference>
<dbReference type="STRING" id="10116.ENSRNOP00000007000"/>
<dbReference type="GlyGen" id="Q5XI79">
    <property type="glycosylation" value="1 site"/>
</dbReference>
<dbReference type="PhosphoSitePlus" id="Q5XI79"/>
<dbReference type="PaxDb" id="10116-ENSRNOP00000007000"/>
<dbReference type="GeneID" id="298748"/>
<dbReference type="KEGG" id="rno:298748"/>
<dbReference type="UCSC" id="RGD:1311578">
    <property type="organism name" value="rat"/>
</dbReference>
<dbReference type="AGR" id="RGD:1311578"/>
<dbReference type="CTD" id="55471"/>
<dbReference type="RGD" id="1311578">
    <property type="gene designation" value="Ndufaf7"/>
</dbReference>
<dbReference type="VEuPathDB" id="HostDB:ENSRNOG00000005279"/>
<dbReference type="eggNOG" id="KOG2901">
    <property type="taxonomic scope" value="Eukaryota"/>
</dbReference>
<dbReference type="HOGENOM" id="CLU_024840_3_1_1"/>
<dbReference type="InParanoid" id="Q5XI79"/>
<dbReference type="PhylomeDB" id="Q5XI79"/>
<dbReference type="TreeFam" id="TF314312"/>
<dbReference type="Reactome" id="R-RNO-6799198">
    <property type="pathway name" value="Complex I biogenesis"/>
</dbReference>
<dbReference type="PRO" id="PR:Q5XI79"/>
<dbReference type="Proteomes" id="UP000002494">
    <property type="component" value="Chromosome 6"/>
</dbReference>
<dbReference type="Bgee" id="ENSRNOG00000005279">
    <property type="expression patterns" value="Expressed in heart and 20 other cell types or tissues"/>
</dbReference>
<dbReference type="GO" id="GO:0005739">
    <property type="term" value="C:mitochondrion"/>
    <property type="evidence" value="ECO:0000250"/>
    <property type="project" value="UniProtKB"/>
</dbReference>
<dbReference type="GO" id="GO:0019899">
    <property type="term" value="F:enzyme binding"/>
    <property type="evidence" value="ECO:0000266"/>
    <property type="project" value="RGD"/>
</dbReference>
<dbReference type="GO" id="GO:0035243">
    <property type="term" value="F:protein-arginine omega-N symmetric methyltransferase activity"/>
    <property type="evidence" value="ECO:0000250"/>
    <property type="project" value="UniProtKB"/>
</dbReference>
<dbReference type="GO" id="GO:0032981">
    <property type="term" value="P:mitochondrial respiratory chain complex I assembly"/>
    <property type="evidence" value="ECO:0000250"/>
    <property type="project" value="UniProtKB"/>
</dbReference>
<dbReference type="GO" id="GO:0019918">
    <property type="term" value="P:peptidyl-arginine methylation, to symmetrical-dimethyl arginine"/>
    <property type="evidence" value="ECO:0000250"/>
    <property type="project" value="UniProtKB"/>
</dbReference>
<dbReference type="FunFam" id="3.40.50.12710:FF:000001">
    <property type="entry name" value="Protein arginine methyltransferase NDUFAF7"/>
    <property type="match status" value="1"/>
</dbReference>
<dbReference type="Gene3D" id="3.40.50.12710">
    <property type="match status" value="1"/>
</dbReference>
<dbReference type="InterPro" id="IPR003788">
    <property type="entry name" value="NDUFAF7"/>
</dbReference>
<dbReference type="InterPro" id="IPR038375">
    <property type="entry name" value="NDUFAF7_sf"/>
</dbReference>
<dbReference type="InterPro" id="IPR029063">
    <property type="entry name" value="SAM-dependent_MTases_sf"/>
</dbReference>
<dbReference type="PANTHER" id="PTHR12049">
    <property type="entry name" value="PROTEIN ARGININE METHYLTRANSFERASE NDUFAF7, MITOCHONDRIAL"/>
    <property type="match status" value="1"/>
</dbReference>
<dbReference type="PANTHER" id="PTHR12049:SF7">
    <property type="entry name" value="PROTEIN ARGININE METHYLTRANSFERASE NDUFAF7, MITOCHONDRIAL"/>
    <property type="match status" value="1"/>
</dbReference>
<dbReference type="Pfam" id="PF02636">
    <property type="entry name" value="Methyltransf_28"/>
    <property type="match status" value="1"/>
</dbReference>
<dbReference type="SUPFAM" id="SSF53335">
    <property type="entry name" value="S-adenosyl-L-methionine-dependent methyltransferases"/>
    <property type="match status" value="1"/>
</dbReference>